<proteinExistence type="inferred from homology"/>
<name>RUVB_BRUC2</name>
<organism>
    <name type="scientific">Brucella canis (strain ATCC 23365 / NCTC 10854 / RM-666)</name>
    <dbReference type="NCBI Taxonomy" id="483179"/>
    <lineage>
        <taxon>Bacteria</taxon>
        <taxon>Pseudomonadati</taxon>
        <taxon>Pseudomonadota</taxon>
        <taxon>Alphaproteobacteria</taxon>
        <taxon>Hyphomicrobiales</taxon>
        <taxon>Brucellaceae</taxon>
        <taxon>Brucella/Ochrobactrum group</taxon>
        <taxon>Brucella</taxon>
    </lineage>
</organism>
<gene>
    <name evidence="1" type="primary">ruvB</name>
    <name type="ordered locus">BCAN_A1741</name>
</gene>
<feature type="chain" id="PRO_1000074073" description="Holliday junction branch migration complex subunit RuvB">
    <location>
        <begin position="1"/>
        <end position="346"/>
    </location>
</feature>
<feature type="region of interest" description="Large ATPase domain (RuvB-L)" evidence="1">
    <location>
        <begin position="1"/>
        <end position="181"/>
    </location>
</feature>
<feature type="region of interest" description="Small ATPAse domain (RuvB-S)" evidence="1">
    <location>
        <begin position="182"/>
        <end position="252"/>
    </location>
</feature>
<feature type="region of interest" description="Head domain (RuvB-H)" evidence="1">
    <location>
        <begin position="255"/>
        <end position="346"/>
    </location>
</feature>
<feature type="binding site" evidence="1">
    <location>
        <position position="20"/>
    </location>
    <ligand>
        <name>ATP</name>
        <dbReference type="ChEBI" id="CHEBI:30616"/>
    </ligand>
</feature>
<feature type="binding site" evidence="1">
    <location>
        <position position="21"/>
    </location>
    <ligand>
        <name>ATP</name>
        <dbReference type="ChEBI" id="CHEBI:30616"/>
    </ligand>
</feature>
<feature type="binding site" evidence="1">
    <location>
        <position position="62"/>
    </location>
    <ligand>
        <name>ATP</name>
        <dbReference type="ChEBI" id="CHEBI:30616"/>
    </ligand>
</feature>
<feature type="binding site" evidence="1">
    <location>
        <position position="65"/>
    </location>
    <ligand>
        <name>ATP</name>
        <dbReference type="ChEBI" id="CHEBI:30616"/>
    </ligand>
</feature>
<feature type="binding site" evidence="1">
    <location>
        <position position="66"/>
    </location>
    <ligand>
        <name>ATP</name>
        <dbReference type="ChEBI" id="CHEBI:30616"/>
    </ligand>
</feature>
<feature type="binding site" evidence="1">
    <location>
        <position position="66"/>
    </location>
    <ligand>
        <name>Mg(2+)</name>
        <dbReference type="ChEBI" id="CHEBI:18420"/>
    </ligand>
</feature>
<feature type="binding site" evidence="1">
    <location>
        <position position="67"/>
    </location>
    <ligand>
        <name>ATP</name>
        <dbReference type="ChEBI" id="CHEBI:30616"/>
    </ligand>
</feature>
<feature type="binding site" evidence="1">
    <location>
        <begin position="128"/>
        <end position="130"/>
    </location>
    <ligand>
        <name>ATP</name>
        <dbReference type="ChEBI" id="CHEBI:30616"/>
    </ligand>
</feature>
<feature type="binding site" evidence="1">
    <location>
        <position position="171"/>
    </location>
    <ligand>
        <name>ATP</name>
        <dbReference type="ChEBI" id="CHEBI:30616"/>
    </ligand>
</feature>
<feature type="binding site" evidence="1">
    <location>
        <position position="181"/>
    </location>
    <ligand>
        <name>ATP</name>
        <dbReference type="ChEBI" id="CHEBI:30616"/>
    </ligand>
</feature>
<feature type="binding site" evidence="1">
    <location>
        <position position="218"/>
    </location>
    <ligand>
        <name>ATP</name>
        <dbReference type="ChEBI" id="CHEBI:30616"/>
    </ligand>
</feature>
<feature type="binding site" evidence="1">
    <location>
        <position position="291"/>
    </location>
    <ligand>
        <name>DNA</name>
        <dbReference type="ChEBI" id="CHEBI:16991"/>
    </ligand>
</feature>
<feature type="binding site" evidence="1">
    <location>
        <position position="310"/>
    </location>
    <ligand>
        <name>DNA</name>
        <dbReference type="ChEBI" id="CHEBI:16991"/>
    </ligand>
</feature>
<feature type="binding site" evidence="1">
    <location>
        <position position="315"/>
    </location>
    <ligand>
        <name>DNA</name>
        <dbReference type="ChEBI" id="CHEBI:16991"/>
    </ligand>
</feature>
<dbReference type="EC" id="3.6.4.-" evidence="1"/>
<dbReference type="EMBL" id="CP000872">
    <property type="protein sequence ID" value="ABX62747.1"/>
    <property type="molecule type" value="Genomic_DNA"/>
</dbReference>
<dbReference type="RefSeq" id="WP_002964791.1">
    <property type="nucleotide sequence ID" value="NC_010103.1"/>
</dbReference>
<dbReference type="SMR" id="A9M7K0"/>
<dbReference type="GeneID" id="97533144"/>
<dbReference type="KEGG" id="bcs:BCAN_A1741"/>
<dbReference type="HOGENOM" id="CLU_055599_1_0_5"/>
<dbReference type="PhylomeDB" id="A9M7K0"/>
<dbReference type="Proteomes" id="UP000001385">
    <property type="component" value="Chromosome I"/>
</dbReference>
<dbReference type="GO" id="GO:0005737">
    <property type="term" value="C:cytoplasm"/>
    <property type="evidence" value="ECO:0007669"/>
    <property type="project" value="UniProtKB-SubCell"/>
</dbReference>
<dbReference type="GO" id="GO:0048476">
    <property type="term" value="C:Holliday junction resolvase complex"/>
    <property type="evidence" value="ECO:0007669"/>
    <property type="project" value="UniProtKB-UniRule"/>
</dbReference>
<dbReference type="GO" id="GO:0005524">
    <property type="term" value="F:ATP binding"/>
    <property type="evidence" value="ECO:0007669"/>
    <property type="project" value="UniProtKB-UniRule"/>
</dbReference>
<dbReference type="GO" id="GO:0016887">
    <property type="term" value="F:ATP hydrolysis activity"/>
    <property type="evidence" value="ECO:0007669"/>
    <property type="project" value="InterPro"/>
</dbReference>
<dbReference type="GO" id="GO:0000400">
    <property type="term" value="F:four-way junction DNA binding"/>
    <property type="evidence" value="ECO:0007669"/>
    <property type="project" value="UniProtKB-UniRule"/>
</dbReference>
<dbReference type="GO" id="GO:0009378">
    <property type="term" value="F:four-way junction helicase activity"/>
    <property type="evidence" value="ECO:0007669"/>
    <property type="project" value="InterPro"/>
</dbReference>
<dbReference type="GO" id="GO:0006310">
    <property type="term" value="P:DNA recombination"/>
    <property type="evidence" value="ECO:0007669"/>
    <property type="project" value="UniProtKB-UniRule"/>
</dbReference>
<dbReference type="GO" id="GO:0006281">
    <property type="term" value="P:DNA repair"/>
    <property type="evidence" value="ECO:0007669"/>
    <property type="project" value="UniProtKB-UniRule"/>
</dbReference>
<dbReference type="CDD" id="cd00009">
    <property type="entry name" value="AAA"/>
    <property type="match status" value="1"/>
</dbReference>
<dbReference type="Gene3D" id="1.10.8.60">
    <property type="match status" value="1"/>
</dbReference>
<dbReference type="Gene3D" id="3.40.50.300">
    <property type="entry name" value="P-loop containing nucleotide triphosphate hydrolases"/>
    <property type="match status" value="1"/>
</dbReference>
<dbReference type="Gene3D" id="1.10.10.10">
    <property type="entry name" value="Winged helix-like DNA-binding domain superfamily/Winged helix DNA-binding domain"/>
    <property type="match status" value="1"/>
</dbReference>
<dbReference type="HAMAP" id="MF_00016">
    <property type="entry name" value="DNA_HJ_migration_RuvB"/>
    <property type="match status" value="1"/>
</dbReference>
<dbReference type="InterPro" id="IPR003593">
    <property type="entry name" value="AAA+_ATPase"/>
</dbReference>
<dbReference type="InterPro" id="IPR041445">
    <property type="entry name" value="AAA_lid_4"/>
</dbReference>
<dbReference type="InterPro" id="IPR000641">
    <property type="entry name" value="CbxX/CfxQ"/>
</dbReference>
<dbReference type="InterPro" id="IPR004605">
    <property type="entry name" value="DNA_helicase_Holl-junc_RuvB"/>
</dbReference>
<dbReference type="InterPro" id="IPR027417">
    <property type="entry name" value="P-loop_NTPase"/>
</dbReference>
<dbReference type="InterPro" id="IPR008824">
    <property type="entry name" value="RuvB-like_N"/>
</dbReference>
<dbReference type="InterPro" id="IPR008823">
    <property type="entry name" value="RuvB_C"/>
</dbReference>
<dbReference type="InterPro" id="IPR036388">
    <property type="entry name" value="WH-like_DNA-bd_sf"/>
</dbReference>
<dbReference type="InterPro" id="IPR036390">
    <property type="entry name" value="WH_DNA-bd_sf"/>
</dbReference>
<dbReference type="NCBIfam" id="NF000868">
    <property type="entry name" value="PRK00080.1"/>
    <property type="match status" value="1"/>
</dbReference>
<dbReference type="NCBIfam" id="TIGR00635">
    <property type="entry name" value="ruvB"/>
    <property type="match status" value="1"/>
</dbReference>
<dbReference type="PANTHER" id="PTHR42848">
    <property type="match status" value="1"/>
</dbReference>
<dbReference type="PANTHER" id="PTHR42848:SF1">
    <property type="entry name" value="HOLLIDAY JUNCTION BRANCH MIGRATION COMPLEX SUBUNIT RUVB"/>
    <property type="match status" value="1"/>
</dbReference>
<dbReference type="Pfam" id="PF17864">
    <property type="entry name" value="AAA_lid_4"/>
    <property type="match status" value="1"/>
</dbReference>
<dbReference type="Pfam" id="PF05491">
    <property type="entry name" value="RuvB_C"/>
    <property type="match status" value="1"/>
</dbReference>
<dbReference type="Pfam" id="PF05496">
    <property type="entry name" value="RuvB_N"/>
    <property type="match status" value="1"/>
</dbReference>
<dbReference type="PRINTS" id="PR00819">
    <property type="entry name" value="CBXCFQXSUPER"/>
</dbReference>
<dbReference type="SMART" id="SM00382">
    <property type="entry name" value="AAA"/>
    <property type="match status" value="1"/>
</dbReference>
<dbReference type="SUPFAM" id="SSF52540">
    <property type="entry name" value="P-loop containing nucleoside triphosphate hydrolases"/>
    <property type="match status" value="1"/>
</dbReference>
<dbReference type="SUPFAM" id="SSF46785">
    <property type="entry name" value="Winged helix' DNA-binding domain"/>
    <property type="match status" value="1"/>
</dbReference>
<sequence>MSDRNPLIDADRRADEDNTLRPQTLDDFVGQAAARANLKVFIEAAKVRGEALDHVLFVGPPGLGKTTLAQIMAKELGVNFRSTSGPVIAKAGDLAALLTNLEERDVLFIDEIHRLSPAVEEILYPAMEDFQLDLIIGEGPAARSVKIDLAKFTLVAATTRLGLLTTPLRDRFGIPVRLNFYTVEELEYIVRRGARIMQMGISSDGAREVARRSRGTPRIAGRLLRRVRDFALVAGADIIDRRIADEALSRLEVDNRGLDQLDRRYLNIIARNFGGGPVGIETIAAGLSEPRDAIEDIIEPYLIQQGFLQRTPRGRVLTAVAWQHLGLPAPAEIIQQSQYGLFMEDE</sequence>
<reference key="1">
    <citation type="submission" date="2007-10" db="EMBL/GenBank/DDBJ databases">
        <title>Brucella canis ATCC 23365 whole genome shotgun sequencing project.</title>
        <authorList>
            <person name="Setubal J.C."/>
            <person name="Bowns C."/>
            <person name="Boyle S."/>
            <person name="Crasta O.R."/>
            <person name="Czar M.J."/>
            <person name="Dharmanolla C."/>
            <person name="Gillespie J.J."/>
            <person name="Kenyon R.W."/>
            <person name="Lu J."/>
            <person name="Mane S."/>
            <person name="Mohapatra S."/>
            <person name="Nagrani S."/>
            <person name="Purkayastha A."/>
            <person name="Rajasimha H.K."/>
            <person name="Shallom J.M."/>
            <person name="Shallom S."/>
            <person name="Shukla M."/>
            <person name="Snyder E.E."/>
            <person name="Sobral B.W."/>
            <person name="Wattam A.R."/>
            <person name="Will R."/>
            <person name="Williams K."/>
            <person name="Yoo H."/>
            <person name="Bruce D."/>
            <person name="Detter C."/>
            <person name="Munk C."/>
            <person name="Brettin T.S."/>
        </authorList>
    </citation>
    <scope>NUCLEOTIDE SEQUENCE [LARGE SCALE GENOMIC DNA]</scope>
    <source>
        <strain>ATCC 23365 / NCTC 10854 / RM-666</strain>
    </source>
</reference>
<accession>A9M7K0</accession>
<evidence type="ECO:0000255" key="1">
    <source>
        <dbReference type="HAMAP-Rule" id="MF_00016"/>
    </source>
</evidence>
<keyword id="KW-0067">ATP-binding</keyword>
<keyword id="KW-0963">Cytoplasm</keyword>
<keyword id="KW-0227">DNA damage</keyword>
<keyword id="KW-0233">DNA recombination</keyword>
<keyword id="KW-0234">DNA repair</keyword>
<keyword id="KW-0238">DNA-binding</keyword>
<keyword id="KW-0378">Hydrolase</keyword>
<keyword id="KW-0547">Nucleotide-binding</keyword>
<keyword id="KW-1185">Reference proteome</keyword>
<protein>
    <recommendedName>
        <fullName evidence="1">Holliday junction branch migration complex subunit RuvB</fullName>
        <ecNumber evidence="1">3.6.4.-</ecNumber>
    </recommendedName>
</protein>
<comment type="function">
    <text evidence="1">The RuvA-RuvB-RuvC complex processes Holliday junction (HJ) DNA during genetic recombination and DNA repair, while the RuvA-RuvB complex plays an important role in the rescue of blocked DNA replication forks via replication fork reversal (RFR). RuvA specifically binds to HJ cruciform DNA, conferring on it an open structure. The RuvB hexamer acts as an ATP-dependent pump, pulling dsDNA into and through the RuvAB complex. RuvB forms 2 homohexamers on either side of HJ DNA bound by 1 or 2 RuvA tetramers; 4 subunits per hexamer contact DNA at a time. Coordinated motions by a converter formed by DNA-disengaged RuvB subunits stimulates ATP hydrolysis and nucleotide exchange. Immobilization of the converter enables RuvB to convert the ATP-contained energy into a lever motion, pulling 2 nucleotides of DNA out of the RuvA tetramer per ATP hydrolyzed, thus driving DNA branch migration. The RuvB motors rotate together with the DNA substrate, which together with the progressing nucleotide cycle form the mechanistic basis for DNA recombination by continuous HJ branch migration. Branch migration allows RuvC to scan DNA until it finds its consensus sequence, where it cleaves and resolves cruciform DNA.</text>
</comment>
<comment type="catalytic activity">
    <reaction evidence="1">
        <text>ATP + H2O = ADP + phosphate + H(+)</text>
        <dbReference type="Rhea" id="RHEA:13065"/>
        <dbReference type="ChEBI" id="CHEBI:15377"/>
        <dbReference type="ChEBI" id="CHEBI:15378"/>
        <dbReference type="ChEBI" id="CHEBI:30616"/>
        <dbReference type="ChEBI" id="CHEBI:43474"/>
        <dbReference type="ChEBI" id="CHEBI:456216"/>
    </reaction>
</comment>
<comment type="subunit">
    <text evidence="1">Homohexamer. Forms an RuvA(8)-RuvB(12)-Holliday junction (HJ) complex. HJ DNA is sandwiched between 2 RuvA tetramers; dsDNA enters through RuvA and exits via RuvB. An RuvB hexamer assembles on each DNA strand where it exits the tetramer. Each RuvB hexamer is contacted by two RuvA subunits (via domain III) on 2 adjacent RuvB subunits; this complex drives branch migration. In the full resolvosome a probable DNA-RuvA(4)-RuvB(12)-RuvC(2) complex forms which resolves the HJ.</text>
</comment>
<comment type="subcellular location">
    <subcellularLocation>
        <location evidence="1">Cytoplasm</location>
    </subcellularLocation>
</comment>
<comment type="domain">
    <text evidence="1">Has 3 domains, the large (RuvB-L) and small ATPase (RuvB-S) domains and the C-terminal head (RuvB-H) domain. The head domain binds DNA, while the ATPase domains jointly bind ATP, ADP or are empty depending on the state of the subunit in the translocation cycle. During a single DNA translocation step the structure of each domain remains the same, but their relative positions change.</text>
</comment>
<comment type="similarity">
    <text evidence="1">Belongs to the RuvB family.</text>
</comment>